<sequence length="737" mass="80080">MDGSELVEPTTKCPLKHGVRFHTSFGGRSNRDWWPNQLNLKILHQHAPASNPMPAGFSYAEQVETLDVEALKRDLAALMTDSQDWWPADYGHYGPLFVRMAWHSAGTYRTGDGRGGAGGGQQRFAPLNSWPDNGNLDKARRLIWPIKQKYGARISWADLMILAADVGMETMGFKTFGFGFGREDTWEPEEDVHWGAEDTWLGDARYTGERELDKPLGAVQMGLIYVNPEGPNGKPDPLAAAHDIRETFARMAMNDEETVALIAGGHTFGKAHGAGDAAHVGVEPEAAGIALQGLGWKNSFGSGVGSDAITSGLEGPWTPNPIKWDNGFFDTLFGHEWELTKSPAGAFQWTPKDPEAGPKAPDAHDPSRQVAPMMLTTDLALRLDPNYGPISKRFHENPDQFQDAFARAWFKLTHRDMGPKARYLGPLVPQEELLWQDPLPEPQGPPIDANDIRELKAKVLATGLSVPQLVATAWASASTFRGSDKRGGANGARIRLSPQKDWAVNQPAQLANVLATLEGVQSAFNGGQTDGKTVSLADLIVLAGCAAVEQAAKAAGHDVEVPFTPGRVDASQNQTDVASFGVLEPKADGFRNYLNTDLPLTAEELLVDKAQLLTLSAPEMTVLVGGLRALNANTDQSSHGVFTTRPGSLTNDFFVNLLDMRTVWTATSEDEAQFEGRDRTTGDLKWTATRVDLIFGSNSQLRALAEVFAQSDSQGAFVGAFVAAWTKVMNLDRFDLA</sequence>
<organism>
    <name type="scientific">Caulobacter sp. (strain K31)</name>
    <dbReference type="NCBI Taxonomy" id="366602"/>
    <lineage>
        <taxon>Bacteria</taxon>
        <taxon>Pseudomonadati</taxon>
        <taxon>Pseudomonadota</taxon>
        <taxon>Alphaproteobacteria</taxon>
        <taxon>Caulobacterales</taxon>
        <taxon>Caulobacteraceae</taxon>
        <taxon>Caulobacter</taxon>
    </lineage>
</organism>
<protein>
    <recommendedName>
        <fullName evidence="1">Catalase-peroxidase</fullName>
        <shortName evidence="1">CP</shortName>
        <ecNumber evidence="1">1.11.1.21</ecNumber>
    </recommendedName>
    <alternativeName>
        <fullName evidence="1">Peroxidase/catalase</fullName>
    </alternativeName>
</protein>
<comment type="function">
    <text evidence="1">Bifunctional enzyme with both catalase and broad-spectrum peroxidase activity.</text>
</comment>
<comment type="catalytic activity">
    <reaction evidence="1">
        <text>H2O2 + AH2 = A + 2 H2O</text>
        <dbReference type="Rhea" id="RHEA:30275"/>
        <dbReference type="ChEBI" id="CHEBI:13193"/>
        <dbReference type="ChEBI" id="CHEBI:15377"/>
        <dbReference type="ChEBI" id="CHEBI:16240"/>
        <dbReference type="ChEBI" id="CHEBI:17499"/>
        <dbReference type="EC" id="1.11.1.21"/>
    </reaction>
</comment>
<comment type="catalytic activity">
    <reaction evidence="1">
        <text>2 H2O2 = O2 + 2 H2O</text>
        <dbReference type="Rhea" id="RHEA:20309"/>
        <dbReference type="ChEBI" id="CHEBI:15377"/>
        <dbReference type="ChEBI" id="CHEBI:15379"/>
        <dbReference type="ChEBI" id="CHEBI:16240"/>
        <dbReference type="EC" id="1.11.1.21"/>
    </reaction>
</comment>
<comment type="cofactor">
    <cofactor evidence="1">
        <name>heme b</name>
        <dbReference type="ChEBI" id="CHEBI:60344"/>
    </cofactor>
    <text evidence="1">Binds 1 heme b (iron(II)-protoporphyrin IX) group per dimer.</text>
</comment>
<comment type="subunit">
    <text evidence="1">Homodimer or homotetramer.</text>
</comment>
<comment type="PTM">
    <text evidence="1">Formation of the three residue Trp-Tyr-Met cross-link is important for the catalase, but not the peroxidase activity of the enzyme.</text>
</comment>
<comment type="similarity">
    <text evidence="1">Belongs to the peroxidase family. Peroxidase/catalase subfamily.</text>
</comment>
<feature type="chain" id="PRO_0000354754" description="Catalase-peroxidase">
    <location>
        <begin position="1"/>
        <end position="737"/>
    </location>
</feature>
<feature type="active site" description="Proton acceptor" evidence="1">
    <location>
        <position position="103"/>
    </location>
</feature>
<feature type="binding site" description="axial binding residue" evidence="1">
    <location>
        <position position="266"/>
    </location>
    <ligand>
        <name>heme b</name>
        <dbReference type="ChEBI" id="CHEBI:60344"/>
    </ligand>
    <ligandPart>
        <name>Fe</name>
        <dbReference type="ChEBI" id="CHEBI:18248"/>
    </ligandPart>
</feature>
<feature type="site" description="Transition state stabilizer" evidence="1">
    <location>
        <position position="99"/>
    </location>
</feature>
<feature type="cross-link" description="Tryptophyl-tyrosyl-methioninium (Trp-Tyr) (with M-251)" evidence="1">
    <location>
        <begin position="102"/>
        <end position="225"/>
    </location>
</feature>
<feature type="cross-link" description="Tryptophyl-tyrosyl-methioninium (Tyr-Met) (with W-102)" evidence="1">
    <location>
        <begin position="225"/>
        <end position="251"/>
    </location>
</feature>
<dbReference type="EC" id="1.11.1.21" evidence="1"/>
<dbReference type="EMBL" id="CP000927">
    <property type="protein sequence ID" value="ABZ70206.1"/>
    <property type="molecule type" value="Genomic_DNA"/>
</dbReference>
<dbReference type="SMR" id="B0SX45"/>
<dbReference type="STRING" id="366602.Caul_1076"/>
<dbReference type="KEGG" id="cak:Caul_1076"/>
<dbReference type="eggNOG" id="COG0376">
    <property type="taxonomic scope" value="Bacteria"/>
</dbReference>
<dbReference type="HOGENOM" id="CLU_025424_2_0_5"/>
<dbReference type="OrthoDB" id="9759743at2"/>
<dbReference type="GO" id="GO:0005829">
    <property type="term" value="C:cytosol"/>
    <property type="evidence" value="ECO:0007669"/>
    <property type="project" value="TreeGrafter"/>
</dbReference>
<dbReference type="GO" id="GO:0004096">
    <property type="term" value="F:catalase activity"/>
    <property type="evidence" value="ECO:0007669"/>
    <property type="project" value="UniProtKB-UniRule"/>
</dbReference>
<dbReference type="GO" id="GO:0020037">
    <property type="term" value="F:heme binding"/>
    <property type="evidence" value="ECO:0007669"/>
    <property type="project" value="InterPro"/>
</dbReference>
<dbReference type="GO" id="GO:0046872">
    <property type="term" value="F:metal ion binding"/>
    <property type="evidence" value="ECO:0007669"/>
    <property type="project" value="UniProtKB-KW"/>
</dbReference>
<dbReference type="GO" id="GO:0070301">
    <property type="term" value="P:cellular response to hydrogen peroxide"/>
    <property type="evidence" value="ECO:0007669"/>
    <property type="project" value="TreeGrafter"/>
</dbReference>
<dbReference type="GO" id="GO:0042744">
    <property type="term" value="P:hydrogen peroxide catabolic process"/>
    <property type="evidence" value="ECO:0007669"/>
    <property type="project" value="UniProtKB-KW"/>
</dbReference>
<dbReference type="CDD" id="cd00649">
    <property type="entry name" value="catalase_peroxidase_1"/>
    <property type="match status" value="1"/>
</dbReference>
<dbReference type="CDD" id="cd08200">
    <property type="entry name" value="catalase_peroxidase_2"/>
    <property type="match status" value="1"/>
</dbReference>
<dbReference type="FunFam" id="1.10.420.10:FF:000002">
    <property type="entry name" value="Catalase-peroxidase"/>
    <property type="match status" value="1"/>
</dbReference>
<dbReference type="FunFam" id="1.10.420.10:FF:000004">
    <property type="entry name" value="Catalase-peroxidase"/>
    <property type="match status" value="1"/>
</dbReference>
<dbReference type="FunFam" id="1.10.520.10:FF:000002">
    <property type="entry name" value="Catalase-peroxidase"/>
    <property type="match status" value="1"/>
</dbReference>
<dbReference type="Gene3D" id="1.10.520.10">
    <property type="match status" value="2"/>
</dbReference>
<dbReference type="Gene3D" id="1.10.420.10">
    <property type="entry name" value="Peroxidase, domain 2"/>
    <property type="match status" value="2"/>
</dbReference>
<dbReference type="HAMAP" id="MF_01961">
    <property type="entry name" value="Catal_peroxid"/>
    <property type="match status" value="1"/>
</dbReference>
<dbReference type="InterPro" id="IPR000763">
    <property type="entry name" value="Catalase_peroxidase"/>
</dbReference>
<dbReference type="InterPro" id="IPR002016">
    <property type="entry name" value="Haem_peroxidase"/>
</dbReference>
<dbReference type="InterPro" id="IPR010255">
    <property type="entry name" value="Haem_peroxidase_sf"/>
</dbReference>
<dbReference type="InterPro" id="IPR019794">
    <property type="entry name" value="Peroxidases_AS"/>
</dbReference>
<dbReference type="InterPro" id="IPR019793">
    <property type="entry name" value="Peroxidases_heam-ligand_BS"/>
</dbReference>
<dbReference type="NCBIfam" id="TIGR00198">
    <property type="entry name" value="cat_per_HPI"/>
    <property type="match status" value="1"/>
</dbReference>
<dbReference type="NCBIfam" id="NF011635">
    <property type="entry name" value="PRK15061.1"/>
    <property type="match status" value="1"/>
</dbReference>
<dbReference type="PANTHER" id="PTHR30555:SF0">
    <property type="entry name" value="CATALASE-PEROXIDASE"/>
    <property type="match status" value="1"/>
</dbReference>
<dbReference type="PANTHER" id="PTHR30555">
    <property type="entry name" value="HYDROPEROXIDASE I, BIFUNCTIONAL CATALASE-PEROXIDASE"/>
    <property type="match status" value="1"/>
</dbReference>
<dbReference type="Pfam" id="PF00141">
    <property type="entry name" value="peroxidase"/>
    <property type="match status" value="2"/>
</dbReference>
<dbReference type="PRINTS" id="PR00460">
    <property type="entry name" value="BPEROXIDASE"/>
</dbReference>
<dbReference type="PRINTS" id="PR00458">
    <property type="entry name" value="PEROXIDASE"/>
</dbReference>
<dbReference type="SUPFAM" id="SSF48113">
    <property type="entry name" value="Heme-dependent peroxidases"/>
    <property type="match status" value="2"/>
</dbReference>
<dbReference type="PROSITE" id="PS00435">
    <property type="entry name" value="PEROXIDASE_1"/>
    <property type="match status" value="1"/>
</dbReference>
<dbReference type="PROSITE" id="PS00436">
    <property type="entry name" value="PEROXIDASE_2"/>
    <property type="match status" value="1"/>
</dbReference>
<dbReference type="PROSITE" id="PS50873">
    <property type="entry name" value="PEROXIDASE_4"/>
    <property type="match status" value="1"/>
</dbReference>
<accession>B0SX45</accession>
<reference key="1">
    <citation type="submission" date="2008-01" db="EMBL/GenBank/DDBJ databases">
        <title>Complete sequence of chromosome of Caulobacter sp. K31.</title>
        <authorList>
            <consortium name="US DOE Joint Genome Institute"/>
            <person name="Copeland A."/>
            <person name="Lucas S."/>
            <person name="Lapidus A."/>
            <person name="Barry K."/>
            <person name="Glavina del Rio T."/>
            <person name="Dalin E."/>
            <person name="Tice H."/>
            <person name="Pitluck S."/>
            <person name="Bruce D."/>
            <person name="Goodwin L."/>
            <person name="Thompson L.S."/>
            <person name="Brettin T."/>
            <person name="Detter J.C."/>
            <person name="Han C."/>
            <person name="Schmutz J."/>
            <person name="Larimer F."/>
            <person name="Land M."/>
            <person name="Hauser L."/>
            <person name="Kyrpides N."/>
            <person name="Kim E."/>
            <person name="Stephens C."/>
            <person name="Richardson P."/>
        </authorList>
    </citation>
    <scope>NUCLEOTIDE SEQUENCE [LARGE SCALE GENOMIC DNA]</scope>
    <source>
        <strain>K31</strain>
    </source>
</reference>
<keyword id="KW-0349">Heme</keyword>
<keyword id="KW-0376">Hydrogen peroxide</keyword>
<keyword id="KW-0408">Iron</keyword>
<keyword id="KW-0479">Metal-binding</keyword>
<keyword id="KW-0560">Oxidoreductase</keyword>
<keyword id="KW-0575">Peroxidase</keyword>
<name>KATG_CAUSK</name>
<proteinExistence type="inferred from homology"/>
<gene>
    <name evidence="1" type="primary">katG</name>
    <name type="ordered locus">Caul_1076</name>
</gene>
<evidence type="ECO:0000255" key="1">
    <source>
        <dbReference type="HAMAP-Rule" id="MF_01961"/>
    </source>
</evidence>